<dbReference type="EMBL" id="AP005492">
    <property type="protein sequence ID" value="BAD62014.1"/>
    <property type="molecule type" value="Genomic_DNA"/>
</dbReference>
<dbReference type="EMBL" id="AP008212">
    <property type="protein sequence ID" value="BAF19656.1"/>
    <property type="molecule type" value="Genomic_DNA"/>
</dbReference>
<dbReference type="EMBL" id="AP014962">
    <property type="protein sequence ID" value="BAS98003.1"/>
    <property type="molecule type" value="Genomic_DNA"/>
</dbReference>
<dbReference type="EMBL" id="AK101510">
    <property type="status" value="NOT_ANNOTATED_CDS"/>
    <property type="molecule type" value="mRNA"/>
</dbReference>
<dbReference type="RefSeq" id="XP_015641849.1">
    <property type="nucleotide sequence ID" value="XM_015786363.1"/>
</dbReference>
<dbReference type="SMR" id="Q5Z5Q3"/>
<dbReference type="STRING" id="39947.Q5Z5Q3"/>
<dbReference type="PaxDb" id="39947-Q5Z5Q3"/>
<dbReference type="EnsemblPlants" id="Os06t0520600-01">
    <property type="protein sequence ID" value="Os06t0520600-01"/>
    <property type="gene ID" value="Os06g0520600"/>
</dbReference>
<dbReference type="Gramene" id="Os06t0520600-01">
    <property type="protein sequence ID" value="Os06t0520600-01"/>
    <property type="gene ID" value="Os06g0520600"/>
</dbReference>
<dbReference type="KEGG" id="dosa:Os06g0520600"/>
<dbReference type="eggNOG" id="KOG0401">
    <property type="taxonomic scope" value="Eukaryota"/>
</dbReference>
<dbReference type="eggNOG" id="KOG1677">
    <property type="taxonomic scope" value="Eukaryota"/>
</dbReference>
<dbReference type="HOGENOM" id="CLU_439029_0_0_1"/>
<dbReference type="InParanoid" id="Q5Z5Q3"/>
<dbReference type="OMA" id="RMYKVKE"/>
<dbReference type="OrthoDB" id="671245at2759"/>
<dbReference type="Proteomes" id="UP000000763">
    <property type="component" value="Chromosome 6"/>
</dbReference>
<dbReference type="Proteomes" id="UP000059680">
    <property type="component" value="Chromosome 6"/>
</dbReference>
<dbReference type="GO" id="GO:0016281">
    <property type="term" value="C:eukaryotic translation initiation factor 4F complex"/>
    <property type="evidence" value="ECO:0000318"/>
    <property type="project" value="GO_Central"/>
</dbReference>
<dbReference type="GO" id="GO:0003677">
    <property type="term" value="F:DNA binding"/>
    <property type="evidence" value="ECO:0007669"/>
    <property type="project" value="UniProtKB-KW"/>
</dbReference>
<dbReference type="GO" id="GO:0003729">
    <property type="term" value="F:mRNA binding"/>
    <property type="evidence" value="ECO:0000318"/>
    <property type="project" value="GO_Central"/>
</dbReference>
<dbReference type="GO" id="GO:0003743">
    <property type="term" value="F:translation initiation factor activity"/>
    <property type="evidence" value="ECO:0000318"/>
    <property type="project" value="GO_Central"/>
</dbReference>
<dbReference type="GO" id="GO:0008270">
    <property type="term" value="F:zinc ion binding"/>
    <property type="evidence" value="ECO:0007669"/>
    <property type="project" value="UniProtKB-KW"/>
</dbReference>
<dbReference type="GO" id="GO:0006413">
    <property type="term" value="P:translational initiation"/>
    <property type="evidence" value="ECO:0000318"/>
    <property type="project" value="GO_Central"/>
</dbReference>
<dbReference type="Gene3D" id="1.25.40.180">
    <property type="match status" value="1"/>
</dbReference>
<dbReference type="Gene3D" id="2.30.30.1190">
    <property type="match status" value="1"/>
</dbReference>
<dbReference type="Gene3D" id="4.10.1000.10">
    <property type="entry name" value="Zinc finger, CCCH-type"/>
    <property type="match status" value="1"/>
</dbReference>
<dbReference type="InterPro" id="IPR016024">
    <property type="entry name" value="ARM-type_fold"/>
</dbReference>
<dbReference type="InterPro" id="IPR003890">
    <property type="entry name" value="MIF4G-like_typ-3"/>
</dbReference>
<dbReference type="InterPro" id="IPR000571">
    <property type="entry name" value="Znf_CCCH"/>
</dbReference>
<dbReference type="InterPro" id="IPR036855">
    <property type="entry name" value="Znf_CCCH_sf"/>
</dbReference>
<dbReference type="PANTHER" id="PTHR23253">
    <property type="entry name" value="EUKARYOTIC TRANSLATION INITIATION FACTOR 4 GAMMA"/>
    <property type="match status" value="1"/>
</dbReference>
<dbReference type="PANTHER" id="PTHR23253:SF81">
    <property type="entry name" value="EUKARYOTIC TRANSLATION INITIATION FACTOR ISOFORM 4G-1"/>
    <property type="match status" value="1"/>
</dbReference>
<dbReference type="Pfam" id="PF02854">
    <property type="entry name" value="MIF4G"/>
    <property type="match status" value="1"/>
</dbReference>
<dbReference type="Pfam" id="PF00642">
    <property type="entry name" value="zf-CCCH"/>
    <property type="match status" value="3"/>
</dbReference>
<dbReference type="SMART" id="SM00543">
    <property type="entry name" value="MIF4G"/>
    <property type="match status" value="1"/>
</dbReference>
<dbReference type="SMART" id="SM00356">
    <property type="entry name" value="ZnF_C3H1"/>
    <property type="match status" value="3"/>
</dbReference>
<dbReference type="SUPFAM" id="SSF48371">
    <property type="entry name" value="ARM repeat"/>
    <property type="match status" value="1"/>
</dbReference>
<dbReference type="SUPFAM" id="SSF90229">
    <property type="entry name" value="CCCH zinc finger"/>
    <property type="match status" value="1"/>
</dbReference>
<dbReference type="PROSITE" id="PS50103">
    <property type="entry name" value="ZF_C3H1"/>
    <property type="match status" value="3"/>
</dbReference>
<accession>Q5Z5Q3</accession>
<accession>A0A0P0WX39</accession>
<keyword id="KW-0238">DNA-binding</keyword>
<keyword id="KW-0479">Metal-binding</keyword>
<keyword id="KW-1185">Reference proteome</keyword>
<keyword id="KW-0677">Repeat</keyword>
<keyword id="KW-0862">Zinc</keyword>
<keyword id="KW-0863">Zinc-finger</keyword>
<proteinExistence type="evidence at transcript level"/>
<feature type="chain" id="PRO_0000346837" description="Zinc finger CCCH domain-containing protein 43">
    <location>
        <begin position="1"/>
        <end position="711"/>
    </location>
</feature>
<feature type="domain" description="MIF4G">
    <location>
        <begin position="384"/>
        <end position="637"/>
    </location>
</feature>
<feature type="zinc finger region" description="C3H1-type 1" evidence="1">
    <location>
        <begin position="44"/>
        <end position="72"/>
    </location>
</feature>
<feature type="zinc finger region" description="C3H1-type 2" evidence="1">
    <location>
        <begin position="90"/>
        <end position="118"/>
    </location>
</feature>
<feature type="zinc finger region" description="C3H1-type 3" evidence="1">
    <location>
        <begin position="157"/>
        <end position="185"/>
    </location>
</feature>
<feature type="region of interest" description="Disordered" evidence="2">
    <location>
        <begin position="1"/>
        <end position="49"/>
    </location>
</feature>
<feature type="compositionally biased region" description="Basic and acidic residues" evidence="2">
    <location>
        <begin position="35"/>
        <end position="47"/>
    </location>
</feature>
<feature type="sequence conflict" description="In Ref. 4; AK101510." evidence="3" ref="4">
    <original>Q</original>
    <variation>R</variation>
    <location>
        <position position="466"/>
    </location>
</feature>
<gene>
    <name type="ordered locus">Os06g0520600</name>
    <name type="ordered locus">LOC_Os06g32860</name>
    <name type="ORF">OSJNBa0077L03.22</name>
</gene>
<sequence length="711" mass="80908">MPQDDDWFWGRPTPVVVGDGETTSKPKPPVAGKTKKVEEQHPRRPGEPDCSYYVKFGSCKFGISCVYNHPDPRPQHGADDKKPAEQFPRRPGEPDCSYYVKFGSCKFGMNCRFNHPPRMPVPPQQEYFSGNACHCHHIEGKSKVEQVKLNVLGLPLRPGTGLCSYYMNRGICKFGTNCKFDHPDPGSDHEKWVVSSNANQVSSQVNIYSVLDHGESNEHTFTSEEVHQPGIPSFHQRISYTRDQLLQLCQNVEVPKDILKFCQDINVELNGEDKISGFGAEKDHVQTPSYKRFDATDSRDWHSWSAQTNWEQKFWDNFSEAKEPYSLGWKQEKFNKPDQSSFHFDSKDQWLKFIKCTPCKSTLIKAEVPLSIQRGIISGKDEVLKTLKSILNTFSPKMFDLQKGQLIETRISSADILKDVINLIFEKVVAEPAFCSTYAQLCTYLNQNLTPFPPEDCDCEEITFKQALSNKCQEIFESAHTVCSEIGKLIGQDREMEQRDKERVVKLETLGNINFIRALLKKKLITNKIIDHIVQAVMDCCKFRFEPLGKVDLLNIIFEGMLDSDSAGDESNICVNAMIGGNKSSIASNDVEMTRKNVNRQNEEAILQKSYDEVPNNKMDPQKNYADGAISYLIEKEKPTNLESSVRICRGGCSISEIMELVVDAGAVEGSDEHFMATLLFIKPEYREIFLTLDTREGRLGWLKRMYKVKE</sequence>
<evidence type="ECO:0000255" key="1">
    <source>
        <dbReference type="PROSITE-ProRule" id="PRU00723"/>
    </source>
</evidence>
<evidence type="ECO:0000256" key="2">
    <source>
        <dbReference type="SAM" id="MobiDB-lite"/>
    </source>
</evidence>
<evidence type="ECO:0000305" key="3"/>
<organism>
    <name type="scientific">Oryza sativa subsp. japonica</name>
    <name type="common">Rice</name>
    <dbReference type="NCBI Taxonomy" id="39947"/>
    <lineage>
        <taxon>Eukaryota</taxon>
        <taxon>Viridiplantae</taxon>
        <taxon>Streptophyta</taxon>
        <taxon>Embryophyta</taxon>
        <taxon>Tracheophyta</taxon>
        <taxon>Spermatophyta</taxon>
        <taxon>Magnoliopsida</taxon>
        <taxon>Liliopsida</taxon>
        <taxon>Poales</taxon>
        <taxon>Poaceae</taxon>
        <taxon>BOP clade</taxon>
        <taxon>Oryzoideae</taxon>
        <taxon>Oryzeae</taxon>
        <taxon>Oryzinae</taxon>
        <taxon>Oryza</taxon>
        <taxon>Oryza sativa</taxon>
    </lineage>
</organism>
<protein>
    <recommendedName>
        <fullName>Zinc finger CCCH domain-containing protein 43</fullName>
        <shortName>OsC3H43</shortName>
    </recommendedName>
</protein>
<reference key="1">
    <citation type="journal article" date="2005" name="Nature">
        <title>The map-based sequence of the rice genome.</title>
        <authorList>
            <consortium name="International rice genome sequencing project (IRGSP)"/>
        </authorList>
    </citation>
    <scope>NUCLEOTIDE SEQUENCE [LARGE SCALE GENOMIC DNA]</scope>
    <source>
        <strain>cv. Nipponbare</strain>
    </source>
</reference>
<reference key="2">
    <citation type="journal article" date="2008" name="Nucleic Acids Res.">
        <title>The rice annotation project database (RAP-DB): 2008 update.</title>
        <authorList>
            <consortium name="The rice annotation project (RAP)"/>
        </authorList>
    </citation>
    <scope>GENOME REANNOTATION</scope>
    <source>
        <strain>cv. Nipponbare</strain>
    </source>
</reference>
<reference key="3">
    <citation type="journal article" date="2013" name="Rice">
        <title>Improvement of the Oryza sativa Nipponbare reference genome using next generation sequence and optical map data.</title>
        <authorList>
            <person name="Kawahara Y."/>
            <person name="de la Bastide M."/>
            <person name="Hamilton J.P."/>
            <person name="Kanamori H."/>
            <person name="McCombie W.R."/>
            <person name="Ouyang S."/>
            <person name="Schwartz D.C."/>
            <person name="Tanaka T."/>
            <person name="Wu J."/>
            <person name="Zhou S."/>
            <person name="Childs K.L."/>
            <person name="Davidson R.M."/>
            <person name="Lin H."/>
            <person name="Quesada-Ocampo L."/>
            <person name="Vaillancourt B."/>
            <person name="Sakai H."/>
            <person name="Lee S.S."/>
            <person name="Kim J."/>
            <person name="Numa H."/>
            <person name="Itoh T."/>
            <person name="Buell C.R."/>
            <person name="Matsumoto T."/>
        </authorList>
    </citation>
    <scope>GENOME REANNOTATION</scope>
    <source>
        <strain>cv. Nipponbare</strain>
    </source>
</reference>
<reference key="4">
    <citation type="journal article" date="2003" name="Science">
        <title>Collection, mapping, and annotation of over 28,000 cDNA clones from japonica rice.</title>
        <authorList>
            <consortium name="The rice full-length cDNA consortium"/>
        </authorList>
    </citation>
    <scope>NUCLEOTIDE SEQUENCE [LARGE SCALE MRNA]</scope>
    <source>
        <strain>cv. Nipponbare</strain>
    </source>
</reference>
<reference key="5">
    <citation type="journal article" date="2008" name="BMC Genomics">
        <title>Genome-wide analysis of CCCH zinc finger family in Arabidopsis and rice.</title>
        <authorList>
            <person name="Wang D."/>
            <person name="Guo Y."/>
            <person name="Wu C."/>
            <person name="Yang G."/>
            <person name="Li Y."/>
            <person name="Zheng C."/>
        </authorList>
    </citation>
    <scope>NOMENCLATURE</scope>
</reference>
<name>C3H43_ORYSJ</name>